<sequence>MTMTDPLGDMLTRIRNGAARRKASVVTPASKLRARVLDVLQAEGYIRGYSEIDHGNGKAEITIELKYYEGASVIREIGRVSKPGRRVYVSVKSIPQVANGLGITILSTPKGVMADHQAREQNVGGEVLCSVF</sequence>
<feature type="chain" id="PRO_1000165299" description="Small ribosomal subunit protein uS8">
    <location>
        <begin position="1"/>
        <end position="132"/>
    </location>
</feature>
<comment type="function">
    <text evidence="1">One of the primary rRNA binding proteins, it binds directly to 16S rRNA central domain where it helps coordinate assembly of the platform of the 30S subunit.</text>
</comment>
<comment type="subunit">
    <text evidence="1">Part of the 30S ribosomal subunit. Contacts proteins S5 and S12.</text>
</comment>
<comment type="similarity">
    <text evidence="1">Belongs to the universal ribosomal protein uS8 family.</text>
</comment>
<dbReference type="EMBL" id="CP000633">
    <property type="protein sequence ID" value="ACM36331.1"/>
    <property type="molecule type" value="Genomic_DNA"/>
</dbReference>
<dbReference type="RefSeq" id="WP_015915752.1">
    <property type="nucleotide sequence ID" value="NC_011989.1"/>
</dbReference>
<dbReference type="SMR" id="B9JVQ1"/>
<dbReference type="STRING" id="311402.Avi_1855"/>
<dbReference type="GeneID" id="60682417"/>
<dbReference type="KEGG" id="avi:Avi_1855"/>
<dbReference type="eggNOG" id="COG0096">
    <property type="taxonomic scope" value="Bacteria"/>
</dbReference>
<dbReference type="HOGENOM" id="CLU_098428_0_0_5"/>
<dbReference type="Proteomes" id="UP000001596">
    <property type="component" value="Chromosome 1"/>
</dbReference>
<dbReference type="GO" id="GO:1990904">
    <property type="term" value="C:ribonucleoprotein complex"/>
    <property type="evidence" value="ECO:0007669"/>
    <property type="project" value="UniProtKB-KW"/>
</dbReference>
<dbReference type="GO" id="GO:0005840">
    <property type="term" value="C:ribosome"/>
    <property type="evidence" value="ECO:0007669"/>
    <property type="project" value="UniProtKB-KW"/>
</dbReference>
<dbReference type="GO" id="GO:0019843">
    <property type="term" value="F:rRNA binding"/>
    <property type="evidence" value="ECO:0007669"/>
    <property type="project" value="UniProtKB-UniRule"/>
</dbReference>
<dbReference type="GO" id="GO:0003735">
    <property type="term" value="F:structural constituent of ribosome"/>
    <property type="evidence" value="ECO:0007669"/>
    <property type="project" value="InterPro"/>
</dbReference>
<dbReference type="GO" id="GO:0006412">
    <property type="term" value="P:translation"/>
    <property type="evidence" value="ECO:0007669"/>
    <property type="project" value="UniProtKB-UniRule"/>
</dbReference>
<dbReference type="FunFam" id="3.30.1370.30:FF:000002">
    <property type="entry name" value="30S ribosomal protein S8"/>
    <property type="match status" value="1"/>
</dbReference>
<dbReference type="FunFam" id="3.30.1490.10:FF:000001">
    <property type="entry name" value="30S ribosomal protein S8"/>
    <property type="match status" value="1"/>
</dbReference>
<dbReference type="Gene3D" id="3.30.1370.30">
    <property type="match status" value="1"/>
</dbReference>
<dbReference type="Gene3D" id="3.30.1490.10">
    <property type="match status" value="1"/>
</dbReference>
<dbReference type="HAMAP" id="MF_01302_B">
    <property type="entry name" value="Ribosomal_uS8_B"/>
    <property type="match status" value="1"/>
</dbReference>
<dbReference type="InterPro" id="IPR000630">
    <property type="entry name" value="Ribosomal_uS8"/>
</dbReference>
<dbReference type="InterPro" id="IPR047863">
    <property type="entry name" value="Ribosomal_uS8_CS"/>
</dbReference>
<dbReference type="InterPro" id="IPR035987">
    <property type="entry name" value="Ribosomal_uS8_sf"/>
</dbReference>
<dbReference type="NCBIfam" id="NF001109">
    <property type="entry name" value="PRK00136.1"/>
    <property type="match status" value="1"/>
</dbReference>
<dbReference type="PANTHER" id="PTHR11758">
    <property type="entry name" value="40S RIBOSOMAL PROTEIN S15A"/>
    <property type="match status" value="1"/>
</dbReference>
<dbReference type="Pfam" id="PF00410">
    <property type="entry name" value="Ribosomal_S8"/>
    <property type="match status" value="1"/>
</dbReference>
<dbReference type="SUPFAM" id="SSF56047">
    <property type="entry name" value="Ribosomal protein S8"/>
    <property type="match status" value="1"/>
</dbReference>
<dbReference type="PROSITE" id="PS00053">
    <property type="entry name" value="RIBOSOMAL_S8"/>
    <property type="match status" value="1"/>
</dbReference>
<keyword id="KW-1185">Reference proteome</keyword>
<keyword id="KW-0687">Ribonucleoprotein</keyword>
<keyword id="KW-0689">Ribosomal protein</keyword>
<keyword id="KW-0694">RNA-binding</keyword>
<keyword id="KW-0699">rRNA-binding</keyword>
<gene>
    <name evidence="1" type="primary">rpsH</name>
    <name type="ordered locus">Avi_1855</name>
</gene>
<protein>
    <recommendedName>
        <fullName evidence="1">Small ribosomal subunit protein uS8</fullName>
    </recommendedName>
    <alternativeName>
        <fullName evidence="2">30S ribosomal protein S8</fullName>
    </alternativeName>
</protein>
<reference key="1">
    <citation type="journal article" date="2009" name="J. Bacteriol.">
        <title>Genome sequences of three Agrobacterium biovars help elucidate the evolution of multichromosome genomes in bacteria.</title>
        <authorList>
            <person name="Slater S.C."/>
            <person name="Goldman B.S."/>
            <person name="Goodner B."/>
            <person name="Setubal J.C."/>
            <person name="Farrand S.K."/>
            <person name="Nester E.W."/>
            <person name="Burr T.J."/>
            <person name="Banta L."/>
            <person name="Dickerman A.W."/>
            <person name="Paulsen I."/>
            <person name="Otten L."/>
            <person name="Suen G."/>
            <person name="Welch R."/>
            <person name="Almeida N.F."/>
            <person name="Arnold F."/>
            <person name="Burton O.T."/>
            <person name="Du Z."/>
            <person name="Ewing A."/>
            <person name="Godsy E."/>
            <person name="Heisel S."/>
            <person name="Houmiel K.L."/>
            <person name="Jhaveri J."/>
            <person name="Lu J."/>
            <person name="Miller N.M."/>
            <person name="Norton S."/>
            <person name="Chen Q."/>
            <person name="Phoolcharoen W."/>
            <person name="Ohlin V."/>
            <person name="Ondrusek D."/>
            <person name="Pride N."/>
            <person name="Stricklin S.L."/>
            <person name="Sun J."/>
            <person name="Wheeler C."/>
            <person name="Wilson L."/>
            <person name="Zhu H."/>
            <person name="Wood D.W."/>
        </authorList>
    </citation>
    <scope>NUCLEOTIDE SEQUENCE [LARGE SCALE GENOMIC DNA]</scope>
    <source>
        <strain>ATCC BAA-846 / DSM 112012 / S4</strain>
    </source>
</reference>
<evidence type="ECO:0000255" key="1">
    <source>
        <dbReference type="HAMAP-Rule" id="MF_01302"/>
    </source>
</evidence>
<evidence type="ECO:0000305" key="2"/>
<accession>B9JVQ1</accession>
<organism>
    <name type="scientific">Allorhizobium ampelinum (strain ATCC BAA-846 / DSM 112012 / S4)</name>
    <name type="common">Agrobacterium vitis (strain S4)</name>
    <dbReference type="NCBI Taxonomy" id="311402"/>
    <lineage>
        <taxon>Bacteria</taxon>
        <taxon>Pseudomonadati</taxon>
        <taxon>Pseudomonadota</taxon>
        <taxon>Alphaproteobacteria</taxon>
        <taxon>Hyphomicrobiales</taxon>
        <taxon>Rhizobiaceae</taxon>
        <taxon>Rhizobium/Agrobacterium group</taxon>
        <taxon>Allorhizobium</taxon>
        <taxon>Allorhizobium ampelinum</taxon>
    </lineage>
</organism>
<proteinExistence type="inferred from homology"/>
<name>RS8_ALLAM</name>